<sequence length="264" mass="29289">MRILFIGDVVGSPGRDMVKEYVPKLKTKYKPHFTIINGENAAHGKGLTEKIYHSLIQSGADAITMGNHTWDKKEIFDFIDDVPNLVRPANFPEGTPGKGITYVKANGKELAVINLQGRTFLPPLDDPFLKADELIAEAAKRTPYIFIDFHAEATSEKLALGWYTDGRASAVVGTHTHVQTADNRILPKGTAYITDVGMTGPYDGILGMDRETIIKRFKTNLPVRFTVAEGKTTLSGVVIDIDDQTKKAVKIERILINDDHMFFE</sequence>
<keyword id="KW-0002">3D-structure</keyword>
<keyword id="KW-0963">Cytoplasm</keyword>
<keyword id="KW-0378">Hydrolase</keyword>
<keyword id="KW-0408">Iron</keyword>
<keyword id="KW-0479">Metal-binding</keyword>
<keyword id="KW-1185">Reference proteome</keyword>
<reference key="1">
    <citation type="journal article" date="1997" name="Nature">
        <title>The complete genome sequence of the Gram-positive bacterium Bacillus subtilis.</title>
        <authorList>
            <person name="Kunst F."/>
            <person name="Ogasawara N."/>
            <person name="Moszer I."/>
            <person name="Albertini A.M."/>
            <person name="Alloni G."/>
            <person name="Azevedo V."/>
            <person name="Bertero M.G."/>
            <person name="Bessieres P."/>
            <person name="Bolotin A."/>
            <person name="Borchert S."/>
            <person name="Borriss R."/>
            <person name="Boursier L."/>
            <person name="Brans A."/>
            <person name="Braun M."/>
            <person name="Brignell S.C."/>
            <person name="Bron S."/>
            <person name="Brouillet S."/>
            <person name="Bruschi C.V."/>
            <person name="Caldwell B."/>
            <person name="Capuano V."/>
            <person name="Carter N.M."/>
            <person name="Choi S.-K."/>
            <person name="Codani J.-J."/>
            <person name="Connerton I.F."/>
            <person name="Cummings N.J."/>
            <person name="Daniel R.A."/>
            <person name="Denizot F."/>
            <person name="Devine K.M."/>
            <person name="Duesterhoeft A."/>
            <person name="Ehrlich S.D."/>
            <person name="Emmerson P.T."/>
            <person name="Entian K.-D."/>
            <person name="Errington J."/>
            <person name="Fabret C."/>
            <person name="Ferrari E."/>
            <person name="Foulger D."/>
            <person name="Fritz C."/>
            <person name="Fujita M."/>
            <person name="Fujita Y."/>
            <person name="Fuma S."/>
            <person name="Galizzi A."/>
            <person name="Galleron N."/>
            <person name="Ghim S.-Y."/>
            <person name="Glaser P."/>
            <person name="Goffeau A."/>
            <person name="Golightly E.J."/>
            <person name="Grandi G."/>
            <person name="Guiseppi G."/>
            <person name="Guy B.J."/>
            <person name="Haga K."/>
            <person name="Haiech J."/>
            <person name="Harwood C.R."/>
            <person name="Henaut A."/>
            <person name="Hilbert H."/>
            <person name="Holsappel S."/>
            <person name="Hosono S."/>
            <person name="Hullo M.-F."/>
            <person name="Itaya M."/>
            <person name="Jones L.-M."/>
            <person name="Joris B."/>
            <person name="Karamata D."/>
            <person name="Kasahara Y."/>
            <person name="Klaerr-Blanchard M."/>
            <person name="Klein C."/>
            <person name="Kobayashi Y."/>
            <person name="Koetter P."/>
            <person name="Koningstein G."/>
            <person name="Krogh S."/>
            <person name="Kumano M."/>
            <person name="Kurita K."/>
            <person name="Lapidus A."/>
            <person name="Lardinois S."/>
            <person name="Lauber J."/>
            <person name="Lazarevic V."/>
            <person name="Lee S.-M."/>
            <person name="Levine A."/>
            <person name="Liu H."/>
            <person name="Masuda S."/>
            <person name="Mauel C."/>
            <person name="Medigue C."/>
            <person name="Medina N."/>
            <person name="Mellado R.P."/>
            <person name="Mizuno M."/>
            <person name="Moestl D."/>
            <person name="Nakai S."/>
            <person name="Noback M."/>
            <person name="Noone D."/>
            <person name="O'Reilly M."/>
            <person name="Ogawa K."/>
            <person name="Ogiwara A."/>
            <person name="Oudega B."/>
            <person name="Park S.-H."/>
            <person name="Parro V."/>
            <person name="Pohl T.M."/>
            <person name="Portetelle D."/>
            <person name="Porwollik S."/>
            <person name="Prescott A.M."/>
            <person name="Presecan E."/>
            <person name="Pujic P."/>
            <person name="Purnelle B."/>
            <person name="Rapoport G."/>
            <person name="Rey M."/>
            <person name="Reynolds S."/>
            <person name="Rieger M."/>
            <person name="Rivolta C."/>
            <person name="Rocha E."/>
            <person name="Roche B."/>
            <person name="Rose M."/>
            <person name="Sadaie Y."/>
            <person name="Sato T."/>
            <person name="Scanlan E."/>
            <person name="Schleich S."/>
            <person name="Schroeter R."/>
            <person name="Scoffone F."/>
            <person name="Sekiguchi J."/>
            <person name="Sekowska A."/>
            <person name="Seror S.J."/>
            <person name="Serror P."/>
            <person name="Shin B.-S."/>
            <person name="Soldo B."/>
            <person name="Sorokin A."/>
            <person name="Tacconi E."/>
            <person name="Takagi T."/>
            <person name="Takahashi H."/>
            <person name="Takemaru K."/>
            <person name="Takeuchi M."/>
            <person name="Tamakoshi A."/>
            <person name="Tanaka T."/>
            <person name="Terpstra P."/>
            <person name="Tognoni A."/>
            <person name="Tosato V."/>
            <person name="Uchiyama S."/>
            <person name="Vandenbol M."/>
            <person name="Vannier F."/>
            <person name="Vassarotti A."/>
            <person name="Viari A."/>
            <person name="Wambutt R."/>
            <person name="Wedler E."/>
            <person name="Wedler H."/>
            <person name="Weitzenegger T."/>
            <person name="Winters P."/>
            <person name="Wipat A."/>
            <person name="Yamamoto H."/>
            <person name="Yamane K."/>
            <person name="Yasumoto K."/>
            <person name="Yata K."/>
            <person name="Yoshida K."/>
            <person name="Yoshikawa H.-F."/>
            <person name="Zumstein E."/>
            <person name="Yoshikawa H."/>
            <person name="Danchin A."/>
        </authorList>
    </citation>
    <scope>NUCLEOTIDE SEQUENCE [LARGE SCALE GENOMIC DNA]</scope>
    <source>
        <strain>168</strain>
    </source>
</reference>
<reference key="2">
    <citation type="journal article" date="2009" name="Microbiology">
        <title>From a consortium sequence to a unified sequence: the Bacillus subtilis 168 reference genome a decade later.</title>
        <authorList>
            <person name="Barbe V."/>
            <person name="Cruveiller S."/>
            <person name="Kunst F."/>
            <person name="Lenoble P."/>
            <person name="Meurice G."/>
            <person name="Sekowska A."/>
            <person name="Vallenet D."/>
            <person name="Wang T."/>
            <person name="Moszer I."/>
            <person name="Medigue C."/>
            <person name="Danchin A."/>
        </authorList>
    </citation>
    <scope>SEQUENCE REVISION TO 135-136</scope>
</reference>
<reference key="3">
    <citation type="journal article" date="2011" name="J. Bacteriol.">
        <title>A novel factor controlling bistability in Bacillus subtilis: the YmdB protein affects flagellin expression and biofilm formation.</title>
        <authorList>
            <person name="Diethmaier C."/>
            <person name="Pietack N."/>
            <person name="Gunka K."/>
            <person name="Wrede C."/>
            <person name="Lehnik-Habrink M."/>
            <person name="Herzberg C."/>
            <person name="Huebner S."/>
            <person name="Stuelke J."/>
        </authorList>
    </citation>
    <scope>FUNCTION</scope>
    <scope>DISRUPTION PHENOTYPE</scope>
    <source>
        <strain>168</strain>
        <strain>168 / Marburg / ATCC 6051 / DSM 10 / JCM 1465 / NBRC 13719 / NCIMB 3610 / NRRL NRS-744 / VKM B-501</strain>
    </source>
</reference>
<reference key="4">
    <citation type="journal article" date="2016" name="Cell Rep.">
        <title>Early developmental program shapes colony morphology in bacteria.</title>
        <authorList>
            <person name="Mamou G."/>
            <person name="Malli Mohan G.B."/>
            <person name="Rouvinski A."/>
            <person name="Rosenberg A."/>
            <person name="Ben-Yehuda S."/>
        </authorList>
    </citation>
    <scope>FUNCTION</scope>
    <scope>DISRUPTION PHENOTYPE</scope>
    <scope>MUTAGENESIS OF ASP-8</scope>
</reference>
<reference key="5">
    <citation type="journal article" date="2016" name="Dev. Cell">
        <title>Architecture and characteristics of bacterial nanotubes.</title>
        <authorList>
            <person name="Dubey G.P."/>
            <person name="Malli Mohan G.B."/>
            <person name="Dubrovsky A."/>
            <person name="Amen T."/>
            <person name="Tsipshtein S."/>
            <person name="Rouvinski A."/>
            <person name="Rosenberg A."/>
            <person name="Kaganovich D."/>
            <person name="Sherman E."/>
            <person name="Medalia O."/>
            <person name="Ben-Yehuda S."/>
        </authorList>
    </citation>
    <scope>FUNCTION</scope>
    <scope>SUBCELLULAR LOCATION</scope>
    <scope>DISRUPTION PHENOTYPE</scope>
    <source>
        <strain>168 / PY79</strain>
    </source>
</reference>
<reference evidence="8" key="6">
    <citation type="journal article" date="2014" name="J. Bacteriol.">
        <title>The YmdB phosphodiesterase is a global regulator of late adaptive responses in Bacillus subtilis.</title>
        <authorList>
            <person name="Diethmaier C."/>
            <person name="Newman J.A."/>
            <person name="Kovacs A.T."/>
            <person name="Kaever V."/>
            <person name="Herzberg C."/>
            <person name="Rodrigues C."/>
            <person name="Boonstra M."/>
            <person name="Kuipers O.P."/>
            <person name="Lewis R.J."/>
            <person name="Stulke J."/>
        </authorList>
    </citation>
    <scope>X-RAY CRYSTALLOGRAPHY (1.64 ANGSTROMS) IN COMPLEX WITH IRON</scope>
    <scope>FUNCTION</scope>
    <scope>CATALYTIC ACTIVITY</scope>
    <scope>COFACTOR</scope>
    <scope>BIOPHYSICOCHEMICAL PROPERTIES</scope>
    <scope>SUBUNIT</scope>
    <scope>DISRUPTION PHENOTYPE</scope>
    <scope>ACTIVE SITE</scope>
    <scope>MUTAGENESIS OF GLU-39</scope>
    <source>
        <strain>168</strain>
        <strain>168 / Marburg / ATCC 6051 / DSM 10 / JCM 1465 / NBRC 13719 / NCIMB 3610 / NRRL NRS-744 / VKM B-501</strain>
    </source>
</reference>
<accession>O31775</accession>
<protein>
    <recommendedName>
        <fullName evidence="5">2',3'-cyclic-nucleotide 2'-phosphodiesterase</fullName>
        <ecNumber evidence="2">3.1.4.16</ecNumber>
    </recommendedName>
    <alternativeName>
        <fullName evidence="5">Global regulator YmdB</fullName>
    </alternativeName>
</protein>
<feature type="chain" id="PRO_0000361092" description="2',3'-cyclic-nucleotide 2'-phosphodiesterase">
    <location>
        <begin position="1"/>
        <end position="264"/>
    </location>
</feature>
<feature type="active site" description="Proton donor" evidence="6">
    <location>
        <position position="68"/>
    </location>
</feature>
<feature type="binding site" evidence="2 8">
    <location>
        <position position="8"/>
    </location>
    <ligand>
        <name>Fe cation</name>
        <dbReference type="ChEBI" id="CHEBI:24875"/>
        <label>1</label>
    </ligand>
</feature>
<feature type="binding site" evidence="2 8">
    <location>
        <position position="39"/>
    </location>
    <ligand>
        <name>Fe cation</name>
        <dbReference type="ChEBI" id="CHEBI:24875"/>
        <label>1</label>
    </ligand>
</feature>
<feature type="binding site" evidence="2 8">
    <location>
        <position position="39"/>
    </location>
    <ligand>
        <name>Fe cation</name>
        <dbReference type="ChEBI" id="CHEBI:24875"/>
        <label>2</label>
    </ligand>
</feature>
<feature type="binding site" evidence="2 8">
    <location>
        <position position="40"/>
    </location>
    <ligand>
        <name>Fe cation</name>
        <dbReference type="ChEBI" id="CHEBI:24875"/>
        <label>1</label>
    </ligand>
</feature>
<feature type="binding site" evidence="2 8">
    <location>
        <position position="67"/>
    </location>
    <ligand>
        <name>Fe cation</name>
        <dbReference type="ChEBI" id="CHEBI:24875"/>
        <label>2</label>
    </ligand>
</feature>
<feature type="binding site" evidence="2 8">
    <location>
        <position position="150"/>
    </location>
    <ligand>
        <name>Fe cation</name>
        <dbReference type="ChEBI" id="CHEBI:24875"/>
        <label>2</label>
    </ligand>
</feature>
<feature type="binding site" evidence="2 8">
    <location>
        <position position="175"/>
    </location>
    <ligand>
        <name>Fe cation</name>
        <dbReference type="ChEBI" id="CHEBI:24875"/>
        <label>2</label>
    </ligand>
</feature>
<feature type="binding site" evidence="2 8">
    <location>
        <position position="177"/>
    </location>
    <ligand>
        <name>Fe cation</name>
        <dbReference type="ChEBI" id="CHEBI:24875"/>
        <label>1</label>
    </ligand>
</feature>
<feature type="mutagenesis site" description="Increases cAMP levels. Displays aberrant colony morphologies." evidence="3">
    <original>D</original>
    <variation>A</variation>
    <location>
        <position position="8"/>
    </location>
</feature>
<feature type="mutagenesis site" description="Abolishes phosphodiesterase activity. Overexpresses flagellin and forms smooth colonies. Does not affect stability of the protein." evidence="2">
    <original>E</original>
    <variation>Q</variation>
    <location>
        <position position="39"/>
    </location>
</feature>
<feature type="strand" evidence="9">
    <location>
        <begin position="2"/>
        <end position="6"/>
    </location>
</feature>
<feature type="helix" evidence="9">
    <location>
        <begin position="11"/>
        <end position="29"/>
    </location>
</feature>
<feature type="strand" evidence="9">
    <location>
        <begin position="32"/>
        <end position="37"/>
    </location>
</feature>
<feature type="turn" evidence="9">
    <location>
        <begin position="41"/>
        <end position="44"/>
    </location>
</feature>
<feature type="helix" evidence="9">
    <location>
        <begin position="49"/>
        <end position="57"/>
    </location>
</feature>
<feature type="strand" evidence="9">
    <location>
        <begin position="61"/>
        <end position="64"/>
    </location>
</feature>
<feature type="turn" evidence="9">
    <location>
        <begin position="67"/>
        <end position="70"/>
    </location>
</feature>
<feature type="helix" evidence="9">
    <location>
        <begin position="75"/>
        <end position="78"/>
    </location>
</feature>
<feature type="turn" evidence="9">
    <location>
        <begin position="79"/>
        <end position="81"/>
    </location>
</feature>
<feature type="strand" evidence="9">
    <location>
        <begin position="83"/>
        <end position="85"/>
    </location>
</feature>
<feature type="strand" evidence="9">
    <location>
        <begin position="99"/>
        <end position="105"/>
    </location>
</feature>
<feature type="strand" evidence="9">
    <location>
        <begin position="108"/>
        <end position="116"/>
    </location>
</feature>
<feature type="helix" evidence="9">
    <location>
        <begin position="127"/>
        <end position="139"/>
    </location>
</feature>
<feature type="strand" evidence="9">
    <location>
        <begin position="145"/>
        <end position="150"/>
    </location>
</feature>
<feature type="helix" evidence="9">
    <location>
        <begin position="154"/>
        <end position="163"/>
    </location>
</feature>
<feature type="strand" evidence="9">
    <location>
        <begin position="168"/>
        <end position="178"/>
    </location>
</feature>
<feature type="strand" evidence="9">
    <location>
        <begin position="191"/>
        <end position="194"/>
    </location>
</feature>
<feature type="strand" evidence="9">
    <location>
        <begin position="199"/>
        <end position="205"/>
    </location>
</feature>
<feature type="helix" evidence="9">
    <location>
        <begin position="210"/>
        <end position="219"/>
    </location>
</feature>
<feature type="strand" evidence="9">
    <location>
        <begin position="232"/>
        <end position="241"/>
    </location>
</feature>
<feature type="turn" evidence="9">
    <location>
        <begin position="243"/>
        <end position="245"/>
    </location>
</feature>
<feature type="strand" evidence="9">
    <location>
        <begin position="248"/>
        <end position="257"/>
    </location>
</feature>
<comment type="function">
    <text evidence="1 2 3 4 7">Plays a central, regulatory role in the late adaptive responses and affects the levels of many genes (PubMed:24163345). May act via regulation of cAMP levels (PubMed:26904951). Decreases the expression of motility genes and induces genes involved in biofilm formation, by controlling the expression of SlrR (PubMed:21856853). Required for formation of intercellular nanotubes that bridge neighboring cells to allow molecular exchange (PubMed:26906740). Plays a key role in directing the early stages of colony development (PubMed:26904951). In vitro, has a metal-dependent phosphodiesterase activity against 2',3'-cAMP and 2',3'-cGMP. Also has 3',5'-cyclic-nucleotide phosphodiesterase activity, but cannot use cyclic di-AMP or cyclic di-GMP, and does not have phosphatase activity (PubMed:24163345).</text>
</comment>
<comment type="catalytic activity">
    <reaction evidence="2">
        <text>a nucleoside 2',3'-cyclic phosphate + H2O = a nucleoside 3'-phosphate + H(+)</text>
        <dbReference type="Rhea" id="RHEA:19621"/>
        <dbReference type="ChEBI" id="CHEBI:15377"/>
        <dbReference type="ChEBI" id="CHEBI:15378"/>
        <dbReference type="ChEBI" id="CHEBI:66949"/>
        <dbReference type="ChEBI" id="CHEBI:66954"/>
        <dbReference type="EC" id="3.1.4.16"/>
    </reaction>
</comment>
<comment type="cofactor">
    <cofactor evidence="2">
        <name>Fe(2+)</name>
        <dbReference type="ChEBI" id="CHEBI:29033"/>
    </cofactor>
    <text evidence="6">Corresponds to iron 2 in the structure.</text>
</comment>
<comment type="cofactor">
    <cofactor evidence="2">
        <name>Fe(3+)</name>
        <dbReference type="ChEBI" id="CHEBI:29034"/>
    </cofactor>
    <text evidence="6">Corresponds to iron 1 in the structure.</text>
</comment>
<comment type="biophysicochemical properties">
    <kinetics>
        <KM evidence="2">0.2 mM for 2',3'-cAMP</KM>
        <KM evidence="2">0.29 mM for 2',3'-cGMP</KM>
        <KM evidence="2">1.3 mM for 3',5'-cAMP</KM>
        <KM evidence="2">0.85 mM for 3',5'-cGMP</KM>
        <KM evidence="2">0.94 mM for bis-pNPP</KM>
        <Vmax evidence="2">0.83 umol/min/mg enzyme with 2',3'-cAMP as substrate</Vmax>
        <Vmax evidence="2">1.02 umol/min/mg enzyme with 2',3'-cGMP as substrate</Vmax>
        <Vmax evidence="2">0.45 umol/min/mg enzyme with 3',5'-cAMP as substrate</Vmax>
        <Vmax evidence="2">0.37 umol/min/mg enzyme with 3',5'-cGMP as substrate</Vmax>
        <Vmax evidence="2">105.0 umol/min/mg enzyme with bis-pNPP as substrate</Vmax>
        <text evidence="2">kcat is 15.0 min(-1) with 2',3'-cAMP as substrate. kcat is 22.1 min(-1) with 2',3'-cGMP as substrate. kcat is 9.2 min(-1) with 3',5'-cAMP as substrate. kcat is 7.7 min(-1) with 3',5'-cGMP as substrate.</text>
    </kinetics>
</comment>
<comment type="subunit">
    <text evidence="2">Homodimer.</text>
</comment>
<comment type="subcellular location">
    <subcellularLocation>
        <location evidence="4">Cytoplasm</location>
    </subcellularLocation>
    <text evidence="4">Localizes to the cytoplasm, cell periphery and nanotubes.</text>
</comment>
<comment type="disruption phenotype">
    <text evidence="1 2 3 4">Deletion of the gene affects the levels of over 800 mRNAs (PubMed:24163345). Deletion mutant overexpresses flagellin and other genes of the sigma-D-dependent motility regulon. In contrast, the two major operons for biofilm formation are not expressed and the mutant is unable to form biofilms. All cells are short and motile (PubMed:21856853). Deletion also results in a significant decrease in intercellular molecular exchange (PubMed:26906740). Mutant displays aberrant developmental patterns and forms smaller colonies (PubMed:26904951).</text>
</comment>
<comment type="similarity">
    <text evidence="5">Belongs to the YmdB-like family.</text>
</comment>
<organism>
    <name type="scientific">Bacillus subtilis (strain 168)</name>
    <dbReference type="NCBI Taxonomy" id="224308"/>
    <lineage>
        <taxon>Bacteria</taxon>
        <taxon>Bacillati</taxon>
        <taxon>Bacillota</taxon>
        <taxon>Bacilli</taxon>
        <taxon>Bacillales</taxon>
        <taxon>Bacillaceae</taxon>
        <taxon>Bacillus</taxon>
    </lineage>
</organism>
<gene>
    <name type="primary">ymdB</name>
    <name type="ordered locus">BSU16970</name>
</gene>
<evidence type="ECO:0000269" key="1">
    <source>
    </source>
</evidence>
<evidence type="ECO:0000269" key="2">
    <source>
    </source>
</evidence>
<evidence type="ECO:0000269" key="3">
    <source>
    </source>
</evidence>
<evidence type="ECO:0000269" key="4">
    <source>
    </source>
</evidence>
<evidence type="ECO:0000305" key="5"/>
<evidence type="ECO:0000305" key="6">
    <source>
    </source>
</evidence>
<evidence type="ECO:0000305" key="7">
    <source>
    </source>
</evidence>
<evidence type="ECO:0007744" key="8">
    <source>
        <dbReference type="PDB" id="4B2O"/>
    </source>
</evidence>
<evidence type="ECO:0007829" key="9">
    <source>
        <dbReference type="PDB" id="4B2O"/>
    </source>
</evidence>
<proteinExistence type="evidence at protein level"/>
<name>YMDB_BACSU</name>
<dbReference type="EC" id="3.1.4.16" evidence="2"/>
<dbReference type="EMBL" id="AL009126">
    <property type="protein sequence ID" value="CAB13570.2"/>
    <property type="molecule type" value="Genomic_DNA"/>
</dbReference>
<dbReference type="PIR" id="G69884">
    <property type="entry name" value="G69884"/>
</dbReference>
<dbReference type="RefSeq" id="WP_003245138.1">
    <property type="nucleotide sequence ID" value="NZ_OZ025638.1"/>
</dbReference>
<dbReference type="PDB" id="4B2O">
    <property type="method" value="X-ray"/>
    <property type="resolution" value="1.64 A"/>
    <property type="chains" value="A/B/C/D=1-264"/>
</dbReference>
<dbReference type="PDBsum" id="4B2O"/>
<dbReference type="SMR" id="O31775"/>
<dbReference type="FunCoup" id="O31775">
    <property type="interactions" value="105"/>
</dbReference>
<dbReference type="STRING" id="224308.BSU16970"/>
<dbReference type="PaxDb" id="224308-BSU16970"/>
<dbReference type="EnsemblBacteria" id="CAB13570">
    <property type="protein sequence ID" value="CAB13570"/>
    <property type="gene ID" value="BSU_16970"/>
</dbReference>
<dbReference type="GeneID" id="50133449"/>
<dbReference type="GeneID" id="939441"/>
<dbReference type="KEGG" id="bsu:BSU16970"/>
<dbReference type="PATRIC" id="fig|224308.179.peg.1838"/>
<dbReference type="eggNOG" id="COG1692">
    <property type="taxonomic scope" value="Bacteria"/>
</dbReference>
<dbReference type="InParanoid" id="O31775"/>
<dbReference type="OrthoDB" id="9801109at2"/>
<dbReference type="PhylomeDB" id="O31775"/>
<dbReference type="BioCyc" id="BSUB:BSU16970-MONOMER"/>
<dbReference type="EvolutionaryTrace" id="O31775"/>
<dbReference type="Proteomes" id="UP000001570">
    <property type="component" value="Chromosome"/>
</dbReference>
<dbReference type="GO" id="GO:0005737">
    <property type="term" value="C:cytoplasm"/>
    <property type="evidence" value="ECO:0007669"/>
    <property type="project" value="UniProtKB-SubCell"/>
</dbReference>
<dbReference type="GO" id="GO:0008663">
    <property type="term" value="F:2',3'-cyclic-nucleotide 2'-phosphodiesterase activity"/>
    <property type="evidence" value="ECO:0007669"/>
    <property type="project" value="UniProtKB-EC"/>
</dbReference>
<dbReference type="GO" id="GO:0004113">
    <property type="term" value="F:2',3'-cyclic-nucleotide 3'-phosphodiesterase activity"/>
    <property type="evidence" value="ECO:0000314"/>
    <property type="project" value="CACAO"/>
</dbReference>
<dbReference type="GO" id="GO:0046872">
    <property type="term" value="F:metal ion binding"/>
    <property type="evidence" value="ECO:0007669"/>
    <property type="project" value="UniProtKB-KW"/>
</dbReference>
<dbReference type="CDD" id="cd07382">
    <property type="entry name" value="MPP_DR1281"/>
    <property type="match status" value="1"/>
</dbReference>
<dbReference type="FunFam" id="3.60.21.10:FF:000016">
    <property type="entry name" value="Putative metallophosphoesterase"/>
    <property type="match status" value="1"/>
</dbReference>
<dbReference type="Gene3D" id="3.60.21.10">
    <property type="match status" value="1"/>
</dbReference>
<dbReference type="InterPro" id="IPR029052">
    <property type="entry name" value="Metallo-depent_PP-like"/>
</dbReference>
<dbReference type="InterPro" id="IPR005235">
    <property type="entry name" value="YmdB-like"/>
</dbReference>
<dbReference type="NCBIfam" id="TIGR00282">
    <property type="entry name" value="TIGR00282 family metallophosphoesterase"/>
    <property type="match status" value="1"/>
</dbReference>
<dbReference type="PANTHER" id="PTHR36303">
    <property type="entry name" value="2',3'-CYCLIC-NUCLEOTIDE 2'-PHOSPHODIESTERASE"/>
    <property type="match status" value="1"/>
</dbReference>
<dbReference type="PANTHER" id="PTHR36303:SF1">
    <property type="entry name" value="2',3'-CYCLIC-NUCLEOTIDE 2'-PHOSPHODIESTERASE"/>
    <property type="match status" value="1"/>
</dbReference>
<dbReference type="Pfam" id="PF13277">
    <property type="entry name" value="YmdB"/>
    <property type="match status" value="1"/>
</dbReference>
<dbReference type="PIRSF" id="PIRSF004789">
    <property type="entry name" value="DR1281"/>
    <property type="match status" value="1"/>
</dbReference>
<dbReference type="SUPFAM" id="SSF56300">
    <property type="entry name" value="Metallo-dependent phosphatases"/>
    <property type="match status" value="1"/>
</dbReference>